<keyword id="KW-0066">ATP synthesis</keyword>
<keyword id="KW-0067">ATP-binding</keyword>
<keyword id="KW-0997">Cell inner membrane</keyword>
<keyword id="KW-1003">Cell membrane</keyword>
<keyword id="KW-0139">CF(1)</keyword>
<keyword id="KW-0375">Hydrogen ion transport</keyword>
<keyword id="KW-0406">Ion transport</keyword>
<keyword id="KW-0472">Membrane</keyword>
<keyword id="KW-0547">Nucleotide-binding</keyword>
<keyword id="KW-1278">Translocase</keyword>
<keyword id="KW-0813">Transport</keyword>
<evidence type="ECO:0000255" key="1">
    <source>
        <dbReference type="HAMAP-Rule" id="MF_01347"/>
    </source>
</evidence>
<evidence type="ECO:0000256" key="2">
    <source>
        <dbReference type="SAM" id="MobiDB-lite"/>
    </source>
</evidence>
<proteinExistence type="inferred from homology"/>
<protein>
    <recommendedName>
        <fullName evidence="1">ATP synthase subunit beta 2</fullName>
        <ecNumber evidence="1">7.1.2.2</ecNumber>
    </recommendedName>
    <alternativeName>
        <fullName evidence="1">ATP synthase F1 sector subunit beta 2</fullName>
    </alternativeName>
    <alternativeName>
        <fullName evidence="1">F-ATPase subunit beta 2</fullName>
    </alternativeName>
</protein>
<name>ATPB2_BURP1</name>
<reference key="1">
    <citation type="journal article" date="2010" name="Genome Biol. Evol.">
        <title>Continuing evolution of Burkholderia mallei through genome reduction and large-scale rearrangements.</title>
        <authorList>
            <person name="Losada L."/>
            <person name="Ronning C.M."/>
            <person name="DeShazer D."/>
            <person name="Woods D."/>
            <person name="Fedorova N."/>
            <person name="Kim H.S."/>
            <person name="Shabalina S.A."/>
            <person name="Pearson T.R."/>
            <person name="Brinkac L."/>
            <person name="Tan P."/>
            <person name="Nandi T."/>
            <person name="Crabtree J."/>
            <person name="Badger J."/>
            <person name="Beckstrom-Sternberg S."/>
            <person name="Saqib M."/>
            <person name="Schutzer S.E."/>
            <person name="Keim P."/>
            <person name="Nierman W.C."/>
        </authorList>
    </citation>
    <scope>NUCLEOTIDE SEQUENCE [LARGE SCALE GENOMIC DNA]</scope>
    <source>
        <strain>1710b</strain>
    </source>
</reference>
<comment type="function">
    <text evidence="1">Produces ATP from ADP in the presence of a proton gradient across the membrane. The catalytic sites are hosted primarily by the beta subunits.</text>
</comment>
<comment type="catalytic activity">
    <reaction evidence="1">
        <text>ATP + H2O + 4 H(+)(in) = ADP + phosphate + 5 H(+)(out)</text>
        <dbReference type="Rhea" id="RHEA:57720"/>
        <dbReference type="ChEBI" id="CHEBI:15377"/>
        <dbReference type="ChEBI" id="CHEBI:15378"/>
        <dbReference type="ChEBI" id="CHEBI:30616"/>
        <dbReference type="ChEBI" id="CHEBI:43474"/>
        <dbReference type="ChEBI" id="CHEBI:456216"/>
        <dbReference type="EC" id="7.1.2.2"/>
    </reaction>
</comment>
<comment type="subunit">
    <text evidence="1">F-type ATPases have 2 components, CF(1) - the catalytic core - and CF(0) - the membrane proton channel. CF(1) has five subunits: alpha(3), beta(3), gamma(1), delta(1), epsilon(1). CF(0) has three main subunits: a(1), b(2) and c(9-12). The alpha and beta chains form an alternating ring which encloses part of the gamma chain. CF(1) is attached to CF(0) by a central stalk formed by the gamma and epsilon chains, while a peripheral stalk is formed by the delta and b chains.</text>
</comment>
<comment type="subcellular location">
    <subcellularLocation>
        <location evidence="1">Cell inner membrane</location>
        <topology evidence="1">Peripheral membrane protein</topology>
    </subcellularLocation>
</comment>
<comment type="similarity">
    <text evidence="1">Belongs to the ATPase alpha/beta chains family.</text>
</comment>
<feature type="chain" id="PRO_0000339495" description="ATP synthase subunit beta 2">
    <location>
        <begin position="1"/>
        <end position="528"/>
    </location>
</feature>
<feature type="region of interest" description="Disordered" evidence="2">
    <location>
        <begin position="1"/>
        <end position="27"/>
    </location>
</feature>
<feature type="region of interest" description="Disordered" evidence="2">
    <location>
        <begin position="488"/>
        <end position="528"/>
    </location>
</feature>
<feature type="compositionally biased region" description="Polar residues" evidence="2">
    <location>
        <begin position="1"/>
        <end position="10"/>
    </location>
</feature>
<feature type="compositionally biased region" description="Basic and acidic residues" evidence="2">
    <location>
        <begin position="15"/>
        <end position="27"/>
    </location>
</feature>
<feature type="compositionally biased region" description="Basic and acidic residues" evidence="2">
    <location>
        <begin position="488"/>
        <end position="499"/>
    </location>
</feature>
<feature type="binding site" evidence="1">
    <location>
        <begin position="179"/>
        <end position="186"/>
    </location>
    <ligand>
        <name>ATP</name>
        <dbReference type="ChEBI" id="CHEBI:30616"/>
    </ligand>
</feature>
<gene>
    <name evidence="1" type="primary">atpD2</name>
    <name type="ordered locus">BURPS1710b_A1056</name>
</gene>
<sequence>MADPQATNGTGAACAERDASDVGDARDEGAGRVVAVRGAVIDVAFDGGALPALNEALTIPVDGAAPILAEVHAHLSDAAVRALALGPTGGLRRGAAVRATGGPIRVPVGDAVLGRLLSVTGAPGDDGAALAADVERRPIHRGAPLLAEQKSANALFATGIKVIDLLAPLAQGGKAAMFGGAGVGKTVLVMELIHAMVERYRGISVFAGIGERSREGHEMLLDMRGSGVLGRTVLVYGQMNEPPGARWRVPLTALAIAEYFRDERAQNVLLLMDNVFRFVQAGAEVSGLLGRLPSRVGYQPTLASEVAALQERIASVEGAAVTAIEAVYVPADDFTDPAVTAIAAHVDSMVVLSRAMAAEGMYPAIDPVASSSILLDPLVVGEAHVEVAIEVRRVIEHYRELQDVIALLGIDELGADDRRLVGRARRLQRFLTQPFAVTEAFTGQAGASVEIADTIAGCRAILRGDCDDWRESSLYMVGTLDDARRKEAAAREADARREAAAAASGAGPGTTSDPASGSAEPQGARHGR</sequence>
<organism>
    <name type="scientific">Burkholderia pseudomallei (strain 1710b)</name>
    <dbReference type="NCBI Taxonomy" id="320372"/>
    <lineage>
        <taxon>Bacteria</taxon>
        <taxon>Pseudomonadati</taxon>
        <taxon>Pseudomonadota</taxon>
        <taxon>Betaproteobacteria</taxon>
        <taxon>Burkholderiales</taxon>
        <taxon>Burkholderiaceae</taxon>
        <taxon>Burkholderia</taxon>
        <taxon>pseudomallei group</taxon>
    </lineage>
</organism>
<dbReference type="EC" id="7.1.2.2" evidence="1"/>
<dbReference type="EMBL" id="CP000125">
    <property type="protein sequence ID" value="ABA52056.1"/>
    <property type="molecule type" value="Genomic_DNA"/>
</dbReference>
<dbReference type="SMR" id="Q3JJN9"/>
<dbReference type="EnsemblBacteria" id="ABA52056">
    <property type="protein sequence ID" value="ABA52056"/>
    <property type="gene ID" value="BURPS1710b_A1056"/>
</dbReference>
<dbReference type="KEGG" id="bpm:BURPS1710b_A1056"/>
<dbReference type="HOGENOM" id="CLU_022398_0_2_4"/>
<dbReference type="Proteomes" id="UP000002700">
    <property type="component" value="Chromosome II"/>
</dbReference>
<dbReference type="GO" id="GO:0005886">
    <property type="term" value="C:plasma membrane"/>
    <property type="evidence" value="ECO:0007669"/>
    <property type="project" value="UniProtKB-SubCell"/>
</dbReference>
<dbReference type="GO" id="GO:0045259">
    <property type="term" value="C:proton-transporting ATP synthase complex"/>
    <property type="evidence" value="ECO:0007669"/>
    <property type="project" value="UniProtKB-KW"/>
</dbReference>
<dbReference type="GO" id="GO:0005524">
    <property type="term" value="F:ATP binding"/>
    <property type="evidence" value="ECO:0007669"/>
    <property type="project" value="UniProtKB-UniRule"/>
</dbReference>
<dbReference type="GO" id="GO:0016887">
    <property type="term" value="F:ATP hydrolysis activity"/>
    <property type="evidence" value="ECO:0007669"/>
    <property type="project" value="InterPro"/>
</dbReference>
<dbReference type="GO" id="GO:0046933">
    <property type="term" value="F:proton-transporting ATP synthase activity, rotational mechanism"/>
    <property type="evidence" value="ECO:0007669"/>
    <property type="project" value="UniProtKB-UniRule"/>
</dbReference>
<dbReference type="CDD" id="cd18110">
    <property type="entry name" value="ATP-synt_F1_beta_C"/>
    <property type="match status" value="1"/>
</dbReference>
<dbReference type="CDD" id="cd18115">
    <property type="entry name" value="ATP-synt_F1_beta_N"/>
    <property type="match status" value="1"/>
</dbReference>
<dbReference type="CDD" id="cd01133">
    <property type="entry name" value="F1-ATPase_beta_CD"/>
    <property type="match status" value="1"/>
</dbReference>
<dbReference type="Gene3D" id="2.40.10.170">
    <property type="match status" value="1"/>
</dbReference>
<dbReference type="Gene3D" id="1.10.1140.10">
    <property type="entry name" value="Bovine Mitochondrial F1-atpase, Atp Synthase Beta Chain, Chain D, domain 3"/>
    <property type="match status" value="1"/>
</dbReference>
<dbReference type="Gene3D" id="3.40.50.300">
    <property type="entry name" value="P-loop containing nucleotide triphosphate hydrolases"/>
    <property type="match status" value="1"/>
</dbReference>
<dbReference type="HAMAP" id="MF_01347">
    <property type="entry name" value="ATP_synth_beta_bact"/>
    <property type="match status" value="1"/>
</dbReference>
<dbReference type="InterPro" id="IPR003593">
    <property type="entry name" value="AAA+_ATPase"/>
</dbReference>
<dbReference type="InterPro" id="IPR055190">
    <property type="entry name" value="ATP-synt_VA_C"/>
</dbReference>
<dbReference type="InterPro" id="IPR005722">
    <property type="entry name" value="ATP_synth_F1_bsu"/>
</dbReference>
<dbReference type="InterPro" id="IPR020003">
    <property type="entry name" value="ATPase_a/bsu_AS"/>
</dbReference>
<dbReference type="InterPro" id="IPR050053">
    <property type="entry name" value="ATPase_alpha/beta_chains"/>
</dbReference>
<dbReference type="InterPro" id="IPR004100">
    <property type="entry name" value="ATPase_F1/V1/A1_a/bsu_N"/>
</dbReference>
<dbReference type="InterPro" id="IPR036121">
    <property type="entry name" value="ATPase_F1/V1/A1_a/bsu_N_sf"/>
</dbReference>
<dbReference type="InterPro" id="IPR000194">
    <property type="entry name" value="ATPase_F1/V1/A1_a/bsu_nucl-bd"/>
</dbReference>
<dbReference type="InterPro" id="IPR024034">
    <property type="entry name" value="ATPase_F1/V1_b/a_C"/>
</dbReference>
<dbReference type="InterPro" id="IPR027417">
    <property type="entry name" value="P-loop_NTPase"/>
</dbReference>
<dbReference type="NCBIfam" id="TIGR01039">
    <property type="entry name" value="atpD"/>
    <property type="match status" value="1"/>
</dbReference>
<dbReference type="PANTHER" id="PTHR15184">
    <property type="entry name" value="ATP SYNTHASE"/>
    <property type="match status" value="1"/>
</dbReference>
<dbReference type="PANTHER" id="PTHR15184:SF71">
    <property type="entry name" value="ATP SYNTHASE SUBUNIT BETA, MITOCHONDRIAL"/>
    <property type="match status" value="1"/>
</dbReference>
<dbReference type="Pfam" id="PF00006">
    <property type="entry name" value="ATP-synt_ab"/>
    <property type="match status" value="1"/>
</dbReference>
<dbReference type="Pfam" id="PF02874">
    <property type="entry name" value="ATP-synt_ab_N"/>
    <property type="match status" value="1"/>
</dbReference>
<dbReference type="Pfam" id="PF22919">
    <property type="entry name" value="ATP-synt_VA_C"/>
    <property type="match status" value="1"/>
</dbReference>
<dbReference type="SMART" id="SM00382">
    <property type="entry name" value="AAA"/>
    <property type="match status" value="1"/>
</dbReference>
<dbReference type="SUPFAM" id="SSF47917">
    <property type="entry name" value="C-terminal domain of alpha and beta subunits of F1 ATP synthase"/>
    <property type="match status" value="1"/>
</dbReference>
<dbReference type="SUPFAM" id="SSF50615">
    <property type="entry name" value="N-terminal domain of alpha and beta subunits of F1 ATP synthase"/>
    <property type="match status" value="1"/>
</dbReference>
<dbReference type="SUPFAM" id="SSF52540">
    <property type="entry name" value="P-loop containing nucleoside triphosphate hydrolases"/>
    <property type="match status" value="1"/>
</dbReference>
<dbReference type="PROSITE" id="PS00152">
    <property type="entry name" value="ATPASE_ALPHA_BETA"/>
    <property type="match status" value="1"/>
</dbReference>
<accession>Q3JJN9</accession>